<accession>O47170</accession>
<evidence type="ECO:0000255" key="1">
    <source>
        <dbReference type="HAMAP-Rule" id="MF_01390"/>
    </source>
</evidence>
<geneLocation type="chloroplast"/>
<gene>
    <name evidence="1" type="primary">matK</name>
</gene>
<reference key="1">
    <citation type="journal article" date="1997" name="Am. J. Bot.">
        <title>Phylogenetics relationships of Rhododendroideae (Ericaceae).</title>
        <authorList>
            <person name="Kron K.A."/>
        </authorList>
    </citation>
    <scope>NUCLEOTIDE SEQUENCE [GENOMIC DNA]</scope>
</reference>
<feature type="chain" id="PRO_0000143677" description="Maturase K">
    <location>
        <begin position="1"/>
        <end position="506"/>
    </location>
</feature>
<dbReference type="EMBL" id="U61353">
    <property type="protein sequence ID" value="AAB93752.1"/>
    <property type="molecule type" value="Genomic_DNA"/>
</dbReference>
<dbReference type="GO" id="GO:0009507">
    <property type="term" value="C:chloroplast"/>
    <property type="evidence" value="ECO:0007669"/>
    <property type="project" value="UniProtKB-SubCell"/>
</dbReference>
<dbReference type="GO" id="GO:0003723">
    <property type="term" value="F:RNA binding"/>
    <property type="evidence" value="ECO:0007669"/>
    <property type="project" value="UniProtKB-KW"/>
</dbReference>
<dbReference type="GO" id="GO:0006397">
    <property type="term" value="P:mRNA processing"/>
    <property type="evidence" value="ECO:0007669"/>
    <property type="project" value="UniProtKB-KW"/>
</dbReference>
<dbReference type="GO" id="GO:0008380">
    <property type="term" value="P:RNA splicing"/>
    <property type="evidence" value="ECO:0007669"/>
    <property type="project" value="UniProtKB-UniRule"/>
</dbReference>
<dbReference type="GO" id="GO:0008033">
    <property type="term" value="P:tRNA processing"/>
    <property type="evidence" value="ECO:0007669"/>
    <property type="project" value="UniProtKB-KW"/>
</dbReference>
<dbReference type="HAMAP" id="MF_01390">
    <property type="entry name" value="MatK"/>
    <property type="match status" value="1"/>
</dbReference>
<dbReference type="InterPro" id="IPR024937">
    <property type="entry name" value="Domain_X"/>
</dbReference>
<dbReference type="InterPro" id="IPR002866">
    <property type="entry name" value="Maturase_MatK"/>
</dbReference>
<dbReference type="InterPro" id="IPR024942">
    <property type="entry name" value="Maturase_MatK_N"/>
</dbReference>
<dbReference type="PANTHER" id="PTHR34811">
    <property type="entry name" value="MATURASE K"/>
    <property type="match status" value="1"/>
</dbReference>
<dbReference type="PANTHER" id="PTHR34811:SF1">
    <property type="entry name" value="MATURASE K"/>
    <property type="match status" value="1"/>
</dbReference>
<dbReference type="Pfam" id="PF01348">
    <property type="entry name" value="Intron_maturas2"/>
    <property type="match status" value="1"/>
</dbReference>
<dbReference type="Pfam" id="PF01824">
    <property type="entry name" value="MatK_N"/>
    <property type="match status" value="1"/>
</dbReference>
<keyword id="KW-0150">Chloroplast</keyword>
<keyword id="KW-0507">mRNA processing</keyword>
<keyword id="KW-0934">Plastid</keyword>
<keyword id="KW-0694">RNA-binding</keyword>
<keyword id="KW-0819">tRNA processing</keyword>
<proteinExistence type="inferred from homology"/>
<organism>
    <name type="scientific">Rhododendron hippophaeoides</name>
    <name type="common">Rhododendron</name>
    <dbReference type="NCBI Taxonomy" id="4347"/>
    <lineage>
        <taxon>Eukaryota</taxon>
        <taxon>Viridiplantae</taxon>
        <taxon>Streptophyta</taxon>
        <taxon>Embryophyta</taxon>
        <taxon>Tracheophyta</taxon>
        <taxon>Spermatophyta</taxon>
        <taxon>Magnoliopsida</taxon>
        <taxon>eudicotyledons</taxon>
        <taxon>Gunneridae</taxon>
        <taxon>Pentapetalae</taxon>
        <taxon>asterids</taxon>
        <taxon>Ericales</taxon>
        <taxon>Ericaceae</taxon>
        <taxon>Ericoideae</taxon>
        <taxon>Rhodoreae</taxon>
        <taxon>Rhododendron</taxon>
    </lineage>
</organism>
<comment type="function">
    <text evidence="1">Usually encoded in the trnK tRNA gene intron. Probably assists in splicing its own and other chloroplast group II introns.</text>
</comment>
<comment type="subcellular location">
    <subcellularLocation>
        <location>Plastid</location>
        <location>Chloroplast</location>
    </subcellularLocation>
</comment>
<comment type="similarity">
    <text evidence="1">Belongs to the intron maturase 2 family. MatK subfamily.</text>
</comment>
<name>MATK_RHOHI</name>
<sequence>MEEFKRNLELDRSQQHDFIYPLIFQEYIYALAHDRGLNRSIFLENTGYENKSSLLIVKRLITHLITQMYQQNHFLFSGNDSNQNKFLGYNTNLYSQMIFGGFAVVVEIPFYLRLLSFLEAKERVKSHNLRSIHSIFPFLEDKFSHLVYVLDILISHPIHLEIVIQTLRYWVKDASSLHLLRFFLHEYPIWNSLITPKKSSFSFSIRNQRFFLFLYNFHVCEYESIFVFLRNQSSHLRSISSETFLERISFYRKIELEVFTKDFKAIIWVFKEPFLHYVRYRGKAILASKGTSLLMNKWKYYLVNFWQCYFYMWSQPRRIHINQLSNHSLDFLGYLSTVRLKPLMVRSQMIENSFIIGNASKKFDTLMPITPMIGSLSKAKFCNVLGHPMSKPVWAALSDSDIIERFGRIYRNLSHYYSGSLKKMSLYRIKYILRLSCARTLARKHKSTVRAFLKRLGVGLLEEFFTEEEQVFYLTFAKASSNSGELYRRRVWYLDIICINDLANYE</sequence>
<protein>
    <recommendedName>
        <fullName evidence="1">Maturase K</fullName>
    </recommendedName>
    <alternativeName>
        <fullName evidence="1">Intron maturase</fullName>
    </alternativeName>
</protein>